<gene>
    <name evidence="2" type="primary">PA</name>
</gene>
<name>PA_I68A5</name>
<accession>P13170</accession>
<organismHost>
    <name type="scientific">Aves</name>
    <dbReference type="NCBI Taxonomy" id="8782"/>
</organismHost>
<organismHost>
    <name type="scientific">Homo sapiens</name>
    <name type="common">Human</name>
    <dbReference type="NCBI Taxonomy" id="9606"/>
</organismHost>
<keyword id="KW-1157">Cap snatching</keyword>
<keyword id="KW-0255">Endonuclease</keyword>
<keyword id="KW-1262">Eukaryotic host gene expression shutoff by virus</keyword>
<keyword id="KW-1191">Eukaryotic host transcription shutoff by virus</keyword>
<keyword id="KW-1035">Host cytoplasm</keyword>
<keyword id="KW-1190">Host gene expression shutoff by virus</keyword>
<keyword id="KW-1048">Host nucleus</keyword>
<keyword id="KW-0945">Host-virus interaction</keyword>
<keyword id="KW-0378">Hydrolase</keyword>
<keyword id="KW-1104">Inhibition of host RNA polymerase II by virus</keyword>
<keyword id="KW-0464">Manganese</keyword>
<keyword id="KW-0479">Metal-binding</keyword>
<keyword id="KW-0540">Nuclease</keyword>
<keyword id="KW-0597">Phosphoprotein</keyword>
<keyword id="KW-0688">Ribosomal frameshifting</keyword>
<reference key="1">
    <citation type="journal article" date="1989" name="Virology">
        <title>Evolutionary pathways of the PA genes of influenza A viruses.</title>
        <authorList>
            <person name="Okazaki K."/>
            <person name="Kawaoka Y."/>
            <person name="Webster R.G."/>
        </authorList>
    </citation>
    <scope>NUCLEOTIDE SEQUENCE [GENOMIC RNA]</scope>
</reference>
<sequence>MEDFVRQCFNPMIVELAEKAMKEYGEDLKIETNKFAAICTHLEVCFMYSDFHFINEQGESIMVELDDPNALLKHRFEIIEGRDRTMAWTVVNSICNTTGAEKPKFLPDLYDYKENRFIEIGVTRREVHIYYLEKANKIKSENTHIHIFSFTGEEMATKADYTLDEESRARIKTRLFTIRQEMANRGLWDSFRQSERGEETIEERFEITGTMRRLADQSLPPNFSCLENFRAYVDGFEPNGYIEGKLSQMSKEVNAKIEPFLKTTPRPIRLPDGPPCFQRSKFLLMDALKLSIEDPSHEGEGIPLYDAIKCMRTFFGWKEPYIVKPHEKGINPNYLLSWKQVLAELQDIENEEKIPRTKNMKKTSQLKWALGENMAPEKVDFDNCRDISDLKQYDSDEPELRSLSSWIQNEFNKACELTDSIWIELDEIGEDVAPIEHIASMRRNYFTAEVSHCRATEYIMKGVYINTALLNASCAAMDDFQLIPMISKCRTKEGRRKTNLYGFIIKGRSHLRNDTDVVNFVSMEFSLTDPRLEPHKWEKYCVLEIGDMLLRSAIGQMSRPMFLYVRTNGTSKIKMKWGMEMRPCLLQSLQQIESMVEAESSVKEKDMTKEFFENKSETWPIGESPKGVEEGSIGKVCRTLLAKSVFNSLYASPQLEGFSAESRKLLLVVQALRDNLEPGTFDLGGLYEAIEECLINDPWVLLNASWFNSFLTHALR</sequence>
<evidence type="ECO:0000250" key="1">
    <source>
        <dbReference type="UniProtKB" id="P03433"/>
    </source>
</evidence>
<evidence type="ECO:0000255" key="2">
    <source>
        <dbReference type="HAMAP-Rule" id="MF_04063"/>
    </source>
</evidence>
<dbReference type="EC" id="3.1.-.-" evidence="2"/>
<dbReference type="EMBL" id="M26079">
    <property type="protein sequence ID" value="AAA43246.1"/>
    <property type="molecule type" value="Genomic_RNA"/>
</dbReference>
<dbReference type="RefSeq" id="YP_308852.1">
    <molecule id="P13170-1"/>
    <property type="nucleotide sequence ID" value="NC_007376.1"/>
</dbReference>
<dbReference type="SMR" id="P13170"/>
<dbReference type="MEROPS" id="S62.001"/>
<dbReference type="GeneID" id="3655106"/>
<dbReference type="KEGG" id="vg:3655106"/>
<dbReference type="OrthoDB" id="495at10239"/>
<dbReference type="Proteomes" id="UP000200640">
    <property type="component" value="Genome"/>
</dbReference>
<dbReference type="GO" id="GO:0030430">
    <property type="term" value="C:host cell cytoplasm"/>
    <property type="evidence" value="ECO:0007669"/>
    <property type="project" value="UniProtKB-SubCell"/>
</dbReference>
<dbReference type="GO" id="GO:0042025">
    <property type="term" value="C:host cell nucleus"/>
    <property type="evidence" value="ECO:0007669"/>
    <property type="project" value="UniProtKB-SubCell"/>
</dbReference>
<dbReference type="GO" id="GO:0004519">
    <property type="term" value="F:endonuclease activity"/>
    <property type="evidence" value="ECO:0007669"/>
    <property type="project" value="UniProtKB-KW"/>
</dbReference>
<dbReference type="GO" id="GO:0046872">
    <property type="term" value="F:metal ion binding"/>
    <property type="evidence" value="ECO:0007669"/>
    <property type="project" value="UniProtKB-KW"/>
</dbReference>
<dbReference type="GO" id="GO:0003723">
    <property type="term" value="F:RNA binding"/>
    <property type="evidence" value="ECO:0007669"/>
    <property type="project" value="UniProtKB-UniRule"/>
</dbReference>
<dbReference type="GO" id="GO:0075526">
    <property type="term" value="P:cap snatching"/>
    <property type="evidence" value="ECO:0007669"/>
    <property type="project" value="UniProtKB-UniRule"/>
</dbReference>
<dbReference type="GO" id="GO:0006351">
    <property type="term" value="P:DNA-templated transcription"/>
    <property type="evidence" value="ECO:0007669"/>
    <property type="project" value="UniProtKB-UniRule"/>
</dbReference>
<dbReference type="GO" id="GO:0039657">
    <property type="term" value="P:symbiont-mediated suppression of host gene expression"/>
    <property type="evidence" value="ECO:0007669"/>
    <property type="project" value="UniProtKB-KW"/>
</dbReference>
<dbReference type="GO" id="GO:0039523">
    <property type="term" value="P:symbiont-mediated suppression of host mRNA transcription via inhibition of RNA polymerase II activity"/>
    <property type="evidence" value="ECO:0007669"/>
    <property type="project" value="UniProtKB-UniRule"/>
</dbReference>
<dbReference type="GO" id="GO:0039694">
    <property type="term" value="P:viral RNA genome replication"/>
    <property type="evidence" value="ECO:0007669"/>
    <property type="project" value="InterPro"/>
</dbReference>
<dbReference type="GO" id="GO:0075523">
    <property type="term" value="P:viral translational frameshifting"/>
    <property type="evidence" value="ECO:0007669"/>
    <property type="project" value="UniProtKB-KW"/>
</dbReference>
<dbReference type="FunFam" id="3.40.91.90:FF:000001">
    <property type="entry name" value="Polymerase acidic protein"/>
    <property type="match status" value="1"/>
</dbReference>
<dbReference type="Gene3D" id="3.40.91.90">
    <property type="entry name" value="Influenza RNA-dependent RNA polymerase subunit PA, endonuclease domain"/>
    <property type="match status" value="1"/>
</dbReference>
<dbReference type="HAMAP" id="MF_04063">
    <property type="entry name" value="INFV_PA"/>
    <property type="match status" value="1"/>
</dbReference>
<dbReference type="InterPro" id="IPR037534">
    <property type="entry name" value="INFV_PA"/>
</dbReference>
<dbReference type="InterPro" id="IPR001009">
    <property type="entry name" value="PA/PA-X"/>
</dbReference>
<dbReference type="InterPro" id="IPR038372">
    <property type="entry name" value="PA/PA-X_sf"/>
</dbReference>
<dbReference type="Pfam" id="PF00603">
    <property type="entry name" value="Flu_PA"/>
    <property type="match status" value="1"/>
</dbReference>
<proteinExistence type="inferred from homology"/>
<comment type="function">
    <text evidence="2">Plays an essential role in viral RNA transcription and replication by forming the heterotrimeric polymerase complex together with PB1 and PB2 subunits. The complex transcribes viral mRNAs by using a unique mechanism called cap-snatching. It consists in the hijacking and cleavage of host capped pre-mRNAs. These short capped RNAs are then used as primers for viral mRNAs. The PB2 subunit is responsible for the binding of the 5' cap of cellular pre-mRNAs which are subsequently cleaved after 10-13 nucleotides by the PA subunit that carries the endonuclease activity.</text>
</comment>
<comment type="cofactor">
    <cofactor evidence="2">
        <name>Mn(2+)</name>
        <dbReference type="ChEBI" id="CHEBI:29035"/>
    </cofactor>
    <text evidence="2">Binds 2 manganese ions per subunit.</text>
</comment>
<comment type="subunit">
    <text evidence="1 2">Influenza RNA polymerase is composed of three subunits: PB1, PB2 and PA. Interacts (via C-terminus) with PB1 (via N-terminus).</text>
</comment>
<comment type="subcellular location">
    <subcellularLocation>
        <location evidence="2">Host cytoplasm</location>
    </subcellularLocation>
    <subcellularLocation>
        <location evidence="2">Host nucleus</location>
    </subcellularLocation>
    <text evidence="1 2">PB1 and PA are transported in the host nucleus as a complex.</text>
</comment>
<comment type="alternative products">
    <event type="ribosomal frameshifting"/>
    <isoform>
        <id>P13170-1</id>
        <name>PA</name>
        <sequence type="displayed"/>
    </isoform>
    <isoform>
        <id>P0DJS3-1</id>
        <name>PA-X</name>
        <sequence type="external"/>
    </isoform>
</comment>
<comment type="PTM">
    <text evidence="1 2">Phosphorylated on serines and threonines by host kinases, including human casein kinase II.</text>
</comment>
<comment type="similarity">
    <text evidence="2">Belongs to the influenza viruses PA family.</text>
</comment>
<feature type="chain" id="PRO_0000078789" description="Polymerase acidic protein">
    <location>
        <begin position="1"/>
        <end position="716"/>
    </location>
</feature>
<feature type="short sequence motif" description="Nuclear localization signal 1 (NLS1)" evidence="1 2">
    <location>
        <begin position="124"/>
        <end position="139"/>
    </location>
</feature>
<feature type="short sequence motif" description="Nuclear localization signal 2 (NLS2)" evidence="1 2">
    <location>
        <begin position="184"/>
        <end position="247"/>
    </location>
</feature>
<feature type="binding site" evidence="2">
    <location>
        <position position="41"/>
    </location>
    <ligand>
        <name>Mn(2+)</name>
        <dbReference type="ChEBI" id="CHEBI:29035"/>
        <label>1</label>
    </ligand>
</feature>
<feature type="binding site" evidence="2">
    <location>
        <position position="80"/>
    </location>
    <ligand>
        <name>Mn(2+)</name>
        <dbReference type="ChEBI" id="CHEBI:29035"/>
        <label>2</label>
    </ligand>
</feature>
<feature type="binding site" evidence="2">
    <location>
        <position position="108"/>
    </location>
    <ligand>
        <name>Mn(2+)</name>
        <dbReference type="ChEBI" id="CHEBI:29035"/>
        <label>1</label>
    </ligand>
</feature>
<feature type="binding site" evidence="2">
    <location>
        <position position="108"/>
    </location>
    <ligand>
        <name>Mn(2+)</name>
        <dbReference type="ChEBI" id="CHEBI:29035"/>
        <label>2</label>
    </ligand>
</feature>
<feature type="binding site" evidence="2">
    <location>
        <position position="119"/>
    </location>
    <ligand>
        <name>Mn(2+)</name>
        <dbReference type="ChEBI" id="CHEBI:29035"/>
        <label>1</label>
    </ligand>
</feature>
<feature type="binding site" evidence="2">
    <location>
        <position position="120"/>
    </location>
    <ligand>
        <name>Mn(2+)</name>
        <dbReference type="ChEBI" id="CHEBI:29035"/>
        <label>1</label>
    </ligand>
</feature>
<organism>
    <name type="scientific">Influenza A virus (strain A/Korea/426/1968 H2N2)</name>
    <dbReference type="NCBI Taxonomy" id="488241"/>
    <lineage>
        <taxon>Viruses</taxon>
        <taxon>Riboviria</taxon>
        <taxon>Orthornavirae</taxon>
        <taxon>Negarnaviricota</taxon>
        <taxon>Polyploviricotina</taxon>
        <taxon>Insthoviricetes</taxon>
        <taxon>Articulavirales</taxon>
        <taxon>Orthomyxoviridae</taxon>
        <taxon>Alphainfluenzavirus</taxon>
        <taxon>Alphainfluenzavirus influenzae</taxon>
        <taxon>Influenza A virus</taxon>
    </lineage>
</organism>
<protein>
    <recommendedName>
        <fullName evidence="2">Polymerase acidic protein</fullName>
        <ecNumber evidence="2">3.1.-.-</ecNumber>
    </recommendedName>
    <alternativeName>
        <fullName evidence="2">RNA-directed RNA polymerase subunit P2</fullName>
    </alternativeName>
</protein>